<protein>
    <recommendedName>
        <fullName evidence="13">1-phosphatidylinositol 4,5-bisphosphate phosphodiesterase delta-1</fullName>
        <ecNumber evidence="9">3.1.4.11</ecNumber>
    </recommendedName>
    <alternativeName>
        <fullName>Phosphoinositide phospholipase C-delta-1</fullName>
    </alternativeName>
    <alternativeName>
        <fullName>Phospholipase C-III</fullName>
        <shortName>PLC-III</shortName>
    </alternativeName>
    <alternativeName>
        <fullName>Phospholipase C-delta-1</fullName>
        <shortName>PLC-delta-1</shortName>
    </alternativeName>
</protein>
<reference key="1">
    <citation type="journal article" date="1988" name="Cell">
        <title>Cloning and sequence of multiple forms of phospholipase C.</title>
        <authorList>
            <person name="Suh P.-G."/>
            <person name="Ryu S.H."/>
            <person name="Moon K.H."/>
            <person name="Suh H.W."/>
            <person name="Rhee S.G."/>
        </authorList>
    </citation>
    <scope>NUCLEOTIDE SEQUENCE [MRNA]</scope>
</reference>
<reference key="2">
    <citation type="journal article" date="1991" name="J. Hypertens.">
        <title>Phospholipase C-delta gene of the spontaneously hypertensive rat harbors point mutations causing amino acid substitutions in a catalytic domain.</title>
        <authorList>
            <person name="Yagisawa H."/>
            <person name="Tanase H."/>
            <person name="Nojima H."/>
        </authorList>
    </citation>
    <scope>NUCLEOTIDE SEQUENCE [MRNA]</scope>
    <scope>VARIANTS SHR MET-412; SER-423; ASP-463 AND ALA-668</scope>
    <source>
        <tissue>Aorta</tissue>
    </source>
</reference>
<reference key="3">
    <citation type="journal article" date="1992" name="J. Biol. Chem.">
        <title>Putative inositol 1,4,5-trisphosphate binding proteins in rat brain cytosol.</title>
        <authorList>
            <person name="Kanematsu T."/>
            <person name="Takeya H."/>
            <person name="Watanabe Y."/>
            <person name="Ozaki S."/>
            <person name="Yoshida M."/>
            <person name="Koga T."/>
            <person name="Iwanaga S."/>
            <person name="Hirata M."/>
        </authorList>
    </citation>
    <scope>PROTEIN SEQUENCE OF 50-57; 128-140 AND 728-738</scope>
    <source>
        <tissue>Brain</tissue>
    </source>
</reference>
<reference key="4">
    <citation type="submission" date="2007-04" db="UniProtKB">
        <authorList>
            <person name="Lubec G."/>
            <person name="Diao W."/>
        </authorList>
    </citation>
    <scope>PROTEIN SEQUENCE OF 61-76</scope>
    <scope>IDENTIFICATION BY MASS SPECTROMETRY</scope>
    <source>
        <strain>Sprague-Dawley</strain>
        <tissue>Hippocampus</tissue>
    </source>
</reference>
<reference key="5">
    <citation type="journal article" date="1998" name="J. Biol. Chem.">
        <title>Catalytic domain of phosphoinositide-specific phospholipase C (PLC). Mutational analysis of residues within the active site and hydrophobic ridge of plcdelta1.</title>
        <authorList>
            <person name="Ellis M.V."/>
            <person name="James S.R."/>
            <person name="Perisic O."/>
            <person name="Downes C.P."/>
            <person name="Williams R.L."/>
            <person name="Katan M."/>
        </authorList>
    </citation>
    <scope>MUTAGENESIS OF HIS-311; ASN-312; LEU-320; GLU-341; ASP-343; HIS-356; PHE-360; GLU-390; LYS-438; LYS-440; SER-522; ARG-549; TYR-551 AND TRP-555</scope>
</reference>
<reference key="6">
    <citation type="journal article" date="2005" name="J. Biol. Chem.">
        <title>Role of phospholipase C-zeta domains in Ca2+-dependent phosphatidylinositol 4,5-bisphosphate hydrolysis and cytoplasmic Ca2+ oscillations.</title>
        <authorList>
            <person name="Nomikos M."/>
            <person name="Blayney L.M."/>
            <person name="Larman M.G."/>
            <person name="Campbell K."/>
            <person name="Rossbach A."/>
            <person name="Saunders C.M."/>
            <person name="Swann K."/>
            <person name="Lai F.A."/>
        </authorList>
    </citation>
    <scope>FUNCTION</scope>
    <scope>CATALYTIC ACTIVITY</scope>
</reference>
<reference key="7">
    <citation type="journal article" date="2002" name="Biochem. Biophys. Res. Commun.">
        <title>Modulation of intracellular Ca(2+) via alpha(1B)-adrenoreceptor signaling molecules, G alpha(h) (transglutaminase II) and phospholipase C-delta 1.</title>
        <authorList>
            <person name="Kang S.K."/>
            <person name="Kim D.K."/>
            <person name="Damron D.S."/>
            <person name="Baek K.J."/>
            <person name="Im M.J."/>
        </authorList>
    </citation>
    <scope>INTERACTION WITH TGM2</scope>
</reference>
<reference key="8">
    <citation type="journal article" date="2013" name="PLoS ONE">
        <title>Discovery and confirmation of O-GlcNAcylated proteins in rat liver mitochondria by combination of mass spectrometry and immunological methods.</title>
        <authorList>
            <person name="Cao W."/>
            <person name="Cao J."/>
            <person name="Huang J."/>
            <person name="Yao J."/>
            <person name="Yan G."/>
            <person name="Xu H."/>
            <person name="Yang P."/>
        </authorList>
    </citation>
    <scope>GLYCOSYLATION AT SER-191 AND THR-193</scope>
</reference>
<reference key="9">
    <citation type="journal article" date="1995" name="Cell">
        <title>Structure of the high affinity complex of inositol trisphosphate with a phospholipase C pleckstrin homology domain.</title>
        <authorList>
            <person name="Ferguson K.M."/>
            <person name="Lemmon M.A."/>
            <person name="Schlessinger J."/>
            <person name="Sigler P.B."/>
        </authorList>
    </citation>
    <scope>X-RAY CRYSTALLOGRAPHY (1.9 ANGSTROMS) OF 12-130</scope>
</reference>
<reference key="10">
    <citation type="journal article" date="1996" name="Nat. Struct. Biol.">
        <title>C2 domain conformational changes in phospholipase C-delta 1.</title>
        <authorList>
            <person name="Grobler J.A."/>
            <person name="Essen L.-O."/>
            <person name="Williams R.L."/>
            <person name="Hurley J.H."/>
        </authorList>
    </citation>
    <scope>X-RAY CRYSTALLOGRAPHY (2.4 ANGSTROMS) OF 205-756</scope>
</reference>
<reference key="11">
    <citation type="journal article" date="1996" name="Nature">
        <title>Crystal structure of a mammalian phosphoinositide-specific phospholipase C delta.</title>
        <authorList>
            <person name="Essen L.-O."/>
            <person name="Perisic O."/>
            <person name="Cheung R."/>
            <person name="Katan M."/>
            <person name="Williams R.L."/>
        </authorList>
    </citation>
    <scope>X-RAY CRYSTALLOGRAPHY (2.4 ANGSTROMS) OF 133-756</scope>
</reference>
<reference key="12">
    <citation type="journal article" date="1997" name="Biochemistry">
        <title>A ternary metal binding site in the C2 domain of phosphoinositide-specific phospholipase C-delta1.</title>
        <authorList>
            <person name="Essen L.-O."/>
            <person name="Perisic O."/>
            <person name="Lynch D.E."/>
            <person name="Katan M."/>
            <person name="Williams R.L."/>
        </authorList>
    </citation>
    <scope>X-RAY CRYSTALLOGRAPHY (2.5 ANGSTROMS) OF 133-756</scope>
    <scope>CALCIUM-BINDING</scope>
</reference>
<proteinExistence type="evidence at protein level"/>
<organism>
    <name type="scientific">Rattus norvegicus</name>
    <name type="common">Rat</name>
    <dbReference type="NCBI Taxonomy" id="10116"/>
    <lineage>
        <taxon>Eukaryota</taxon>
        <taxon>Metazoa</taxon>
        <taxon>Chordata</taxon>
        <taxon>Craniata</taxon>
        <taxon>Vertebrata</taxon>
        <taxon>Euteleostomi</taxon>
        <taxon>Mammalia</taxon>
        <taxon>Eutheria</taxon>
        <taxon>Euarchontoglires</taxon>
        <taxon>Glires</taxon>
        <taxon>Rodentia</taxon>
        <taxon>Myomorpha</taxon>
        <taxon>Muroidea</taxon>
        <taxon>Muridae</taxon>
        <taxon>Murinae</taxon>
        <taxon>Rattus</taxon>
    </lineage>
</organism>
<evidence type="ECO:0000250" key="1">
    <source>
        <dbReference type="UniProtKB" id="P51178"/>
    </source>
</evidence>
<evidence type="ECO:0000250" key="2">
    <source>
        <dbReference type="UniProtKB" id="Q8R3B1"/>
    </source>
</evidence>
<evidence type="ECO:0000255" key="3">
    <source>
        <dbReference type="PROSITE-ProRule" id="PRU00041"/>
    </source>
</evidence>
<evidence type="ECO:0000255" key="4">
    <source>
        <dbReference type="PROSITE-ProRule" id="PRU00145"/>
    </source>
</evidence>
<evidence type="ECO:0000255" key="5">
    <source>
        <dbReference type="PROSITE-ProRule" id="PRU00270"/>
    </source>
</evidence>
<evidence type="ECO:0000255" key="6">
    <source>
        <dbReference type="PROSITE-ProRule" id="PRU00271"/>
    </source>
</evidence>
<evidence type="ECO:0000255" key="7">
    <source>
        <dbReference type="PROSITE-ProRule" id="PRU00448"/>
    </source>
</evidence>
<evidence type="ECO:0000269" key="8">
    <source>
    </source>
</evidence>
<evidence type="ECO:0000269" key="9">
    <source>
    </source>
</evidence>
<evidence type="ECO:0000269" key="10">
    <source>
    </source>
</evidence>
<evidence type="ECO:0000269" key="11">
    <source>
    </source>
</evidence>
<evidence type="ECO:0000269" key="12">
    <source>
    </source>
</evidence>
<evidence type="ECO:0000305" key="13"/>
<evidence type="ECO:0000312" key="14">
    <source>
        <dbReference type="RGD" id="3346"/>
    </source>
</evidence>
<evidence type="ECO:0007829" key="15">
    <source>
        <dbReference type="PDB" id="1DJX"/>
    </source>
</evidence>
<evidence type="ECO:0007829" key="16">
    <source>
        <dbReference type="PDB" id="1DJY"/>
    </source>
</evidence>
<evidence type="ECO:0007829" key="17">
    <source>
        <dbReference type="PDB" id="1MAI"/>
    </source>
</evidence>
<evidence type="ECO:0007829" key="18">
    <source>
        <dbReference type="PDB" id="1QAS"/>
    </source>
</evidence>
<evidence type="ECO:0007829" key="19">
    <source>
        <dbReference type="PDB" id="1QAT"/>
    </source>
</evidence>
<name>PLCD1_RAT</name>
<dbReference type="EC" id="3.1.4.11" evidence="9"/>
<dbReference type="EMBL" id="M20637">
    <property type="protein sequence ID" value="AAA41886.1"/>
    <property type="molecule type" value="mRNA"/>
</dbReference>
<dbReference type="EMBL" id="S74591">
    <property type="protein sequence ID" value="AAP31521.1"/>
    <property type="molecule type" value="mRNA"/>
</dbReference>
<dbReference type="PIR" id="B28821">
    <property type="entry name" value="B28821"/>
</dbReference>
<dbReference type="RefSeq" id="NP_058731.1">
    <property type="nucleotide sequence ID" value="NM_017035.1"/>
</dbReference>
<dbReference type="PDB" id="1DJG">
    <property type="method" value="X-ray"/>
    <property type="resolution" value="2.60 A"/>
    <property type="chains" value="A/B=133-756"/>
</dbReference>
<dbReference type="PDB" id="1DJH">
    <property type="method" value="X-ray"/>
    <property type="resolution" value="2.50 A"/>
    <property type="chains" value="A/B=133-756"/>
</dbReference>
<dbReference type="PDB" id="1DJI">
    <property type="method" value="X-ray"/>
    <property type="resolution" value="2.50 A"/>
    <property type="chains" value="A/B=133-756"/>
</dbReference>
<dbReference type="PDB" id="1DJW">
    <property type="method" value="X-ray"/>
    <property type="resolution" value="2.45 A"/>
    <property type="chains" value="A/B=133-756"/>
</dbReference>
<dbReference type="PDB" id="1DJX">
    <property type="method" value="X-ray"/>
    <property type="resolution" value="2.30 A"/>
    <property type="chains" value="A/B=133-756"/>
</dbReference>
<dbReference type="PDB" id="1DJY">
    <property type="method" value="X-ray"/>
    <property type="resolution" value="2.80 A"/>
    <property type="chains" value="A/B=133-756"/>
</dbReference>
<dbReference type="PDB" id="1DJZ">
    <property type="method" value="X-ray"/>
    <property type="resolution" value="2.95 A"/>
    <property type="chains" value="A/B=133-756"/>
</dbReference>
<dbReference type="PDB" id="1MAI">
    <property type="method" value="X-ray"/>
    <property type="resolution" value="1.90 A"/>
    <property type="chains" value="A=11-140"/>
</dbReference>
<dbReference type="PDB" id="1QAS">
    <property type="method" value="X-ray"/>
    <property type="resolution" value="2.40 A"/>
    <property type="chains" value="A/B=135-756"/>
</dbReference>
<dbReference type="PDB" id="1QAT">
    <property type="method" value="X-ray"/>
    <property type="resolution" value="3.00 A"/>
    <property type="chains" value="A/B=135-756"/>
</dbReference>
<dbReference type="PDB" id="2ISD">
    <property type="method" value="X-ray"/>
    <property type="resolution" value="2.50 A"/>
    <property type="chains" value="A/B=133-756"/>
</dbReference>
<dbReference type="PDBsum" id="1DJG"/>
<dbReference type="PDBsum" id="1DJH"/>
<dbReference type="PDBsum" id="1DJI"/>
<dbReference type="PDBsum" id="1DJW"/>
<dbReference type="PDBsum" id="1DJX"/>
<dbReference type="PDBsum" id="1DJY"/>
<dbReference type="PDBsum" id="1DJZ"/>
<dbReference type="PDBsum" id="1MAI"/>
<dbReference type="PDBsum" id="1QAS"/>
<dbReference type="PDBsum" id="1QAT"/>
<dbReference type="PDBsum" id="2ISD"/>
<dbReference type="SMR" id="P10688"/>
<dbReference type="BioGRID" id="246790">
    <property type="interactions" value="1"/>
</dbReference>
<dbReference type="FunCoup" id="P10688">
    <property type="interactions" value="545"/>
</dbReference>
<dbReference type="STRING" id="10116.ENSRNOP00000042824"/>
<dbReference type="BindingDB" id="P10688"/>
<dbReference type="ChEMBL" id="CHEMBL1914273"/>
<dbReference type="SwissLipids" id="SLP:000001066"/>
<dbReference type="GlyCosmos" id="P10688">
    <property type="glycosylation" value="2 sites, No reported glycans"/>
</dbReference>
<dbReference type="GlyGen" id="P10688">
    <property type="glycosylation" value="2 sites, 1 O-linked glycan (2 sites)"/>
</dbReference>
<dbReference type="iPTMnet" id="P10688"/>
<dbReference type="PhosphoSitePlus" id="P10688"/>
<dbReference type="SwissPalm" id="P10688"/>
<dbReference type="jPOST" id="P10688"/>
<dbReference type="PaxDb" id="10116-ENSRNOP00000042824"/>
<dbReference type="GeneID" id="24655"/>
<dbReference type="KEGG" id="rno:24655"/>
<dbReference type="UCSC" id="RGD:3346">
    <property type="organism name" value="rat"/>
</dbReference>
<dbReference type="AGR" id="RGD:3346"/>
<dbReference type="CTD" id="5333"/>
<dbReference type="RGD" id="3346">
    <property type="gene designation" value="Plcd1"/>
</dbReference>
<dbReference type="eggNOG" id="KOG0169">
    <property type="taxonomic scope" value="Eukaryota"/>
</dbReference>
<dbReference type="InParanoid" id="P10688"/>
<dbReference type="OrthoDB" id="269822at2759"/>
<dbReference type="PhylomeDB" id="P10688"/>
<dbReference type="BRENDA" id="3.1.4.11">
    <property type="organism ID" value="5301"/>
</dbReference>
<dbReference type="Reactome" id="R-RNO-1855204">
    <property type="pathway name" value="Synthesis of IP3 and IP4 in the cytosol"/>
</dbReference>
<dbReference type="SABIO-RK" id="P10688"/>
<dbReference type="EvolutionaryTrace" id="P10688"/>
<dbReference type="PRO" id="PR:P10688"/>
<dbReference type="Proteomes" id="UP000002494">
    <property type="component" value="Unplaced"/>
</dbReference>
<dbReference type="GO" id="GO:0005737">
    <property type="term" value="C:cytoplasm"/>
    <property type="evidence" value="ECO:0000266"/>
    <property type="project" value="RGD"/>
</dbReference>
<dbReference type="GO" id="GO:0005829">
    <property type="term" value="C:cytosol"/>
    <property type="evidence" value="ECO:0000266"/>
    <property type="project" value="RGD"/>
</dbReference>
<dbReference type="GO" id="GO:0031966">
    <property type="term" value="C:mitochondrial membrane"/>
    <property type="evidence" value="ECO:0000314"/>
    <property type="project" value="RGD"/>
</dbReference>
<dbReference type="GO" id="GO:0005886">
    <property type="term" value="C:plasma membrane"/>
    <property type="evidence" value="ECO:0000318"/>
    <property type="project" value="GO_Central"/>
</dbReference>
<dbReference type="GO" id="GO:0005509">
    <property type="term" value="F:calcium ion binding"/>
    <property type="evidence" value="ECO:0000314"/>
    <property type="project" value="RGD"/>
</dbReference>
<dbReference type="GO" id="GO:0005544">
    <property type="term" value="F:calcium-dependent phospholipid binding"/>
    <property type="evidence" value="ECO:0000315"/>
    <property type="project" value="CAFA"/>
</dbReference>
<dbReference type="GO" id="GO:0019899">
    <property type="term" value="F:enzyme binding"/>
    <property type="evidence" value="ECO:0000353"/>
    <property type="project" value="RGD"/>
</dbReference>
<dbReference type="GO" id="GO:0032794">
    <property type="term" value="F:GTPase activating protein binding"/>
    <property type="evidence" value="ECO:0000266"/>
    <property type="project" value="RGD"/>
</dbReference>
<dbReference type="GO" id="GO:0070679">
    <property type="term" value="F:inositol 1,4,5 trisphosphate binding"/>
    <property type="evidence" value="ECO:0000315"/>
    <property type="project" value="CAFA"/>
</dbReference>
<dbReference type="GO" id="GO:0004439">
    <property type="term" value="F:phosphatidylinositol-4,5-bisphosphate 5-phosphatase activity"/>
    <property type="evidence" value="ECO:0000314"/>
    <property type="project" value="RGD"/>
</dbReference>
<dbReference type="GO" id="GO:0005546">
    <property type="term" value="F:phosphatidylinositol-4,5-bisphosphate binding"/>
    <property type="evidence" value="ECO:0000314"/>
    <property type="project" value="RGD"/>
</dbReference>
<dbReference type="GO" id="GO:0004435">
    <property type="term" value="F:phosphatidylinositol-4,5-bisphosphate phospholipase C activity"/>
    <property type="evidence" value="ECO:0000314"/>
    <property type="project" value="RGD"/>
</dbReference>
<dbReference type="GO" id="GO:0005543">
    <property type="term" value="F:phospholipid binding"/>
    <property type="evidence" value="ECO:0000314"/>
    <property type="project" value="RGD"/>
</dbReference>
<dbReference type="GO" id="GO:0001525">
    <property type="term" value="P:angiogenesis"/>
    <property type="evidence" value="ECO:0000266"/>
    <property type="project" value="RGD"/>
</dbReference>
<dbReference type="GO" id="GO:0071277">
    <property type="term" value="P:cellular response to calcium ion"/>
    <property type="evidence" value="ECO:0000314"/>
    <property type="project" value="RGD"/>
</dbReference>
<dbReference type="GO" id="GO:0007186">
    <property type="term" value="P:G protein-coupled receptor signaling pathway"/>
    <property type="evidence" value="ECO:0000314"/>
    <property type="project" value="RGD"/>
</dbReference>
<dbReference type="GO" id="GO:0060716">
    <property type="term" value="P:labyrinthine layer blood vessel development"/>
    <property type="evidence" value="ECO:0000266"/>
    <property type="project" value="RGD"/>
</dbReference>
<dbReference type="GO" id="GO:0016042">
    <property type="term" value="P:lipid catabolic process"/>
    <property type="evidence" value="ECO:0007669"/>
    <property type="project" value="UniProtKB-KW"/>
</dbReference>
<dbReference type="GO" id="GO:0046488">
    <property type="term" value="P:phosphatidylinositol metabolic process"/>
    <property type="evidence" value="ECO:0000250"/>
    <property type="project" value="UniProtKB"/>
</dbReference>
<dbReference type="GO" id="GO:0007200">
    <property type="term" value="P:phospholipase C-activating G protein-coupled receptor signaling pathway"/>
    <property type="evidence" value="ECO:0000315"/>
    <property type="project" value="RGD"/>
</dbReference>
<dbReference type="GO" id="GO:0141212">
    <property type="term" value="P:phospholipase C/protein kinase C signal transduction"/>
    <property type="evidence" value="ECO:0000266"/>
    <property type="project" value="RGD"/>
</dbReference>
<dbReference type="GO" id="GO:0032962">
    <property type="term" value="P:positive regulation of inositol trisphosphate biosynthetic process"/>
    <property type="evidence" value="ECO:0000315"/>
    <property type="project" value="RGD"/>
</dbReference>
<dbReference type="GO" id="GO:0010701">
    <property type="term" value="P:positive regulation of norepinephrine secretion"/>
    <property type="evidence" value="ECO:0000315"/>
    <property type="project" value="RGD"/>
</dbReference>
<dbReference type="GO" id="GO:0042127">
    <property type="term" value="P:regulation of cell population proliferation"/>
    <property type="evidence" value="ECO:0000266"/>
    <property type="project" value="RGD"/>
</dbReference>
<dbReference type="GO" id="GO:0010044">
    <property type="term" value="P:response to aluminum ion"/>
    <property type="evidence" value="ECO:0000270"/>
    <property type="project" value="RGD"/>
</dbReference>
<dbReference type="GO" id="GO:0051592">
    <property type="term" value="P:response to calcium ion"/>
    <property type="evidence" value="ECO:0000315"/>
    <property type="project" value="RGD"/>
</dbReference>
<dbReference type="GO" id="GO:0055093">
    <property type="term" value="P:response to hyperoxia"/>
    <property type="evidence" value="ECO:0000270"/>
    <property type="project" value="RGD"/>
</dbReference>
<dbReference type="GO" id="GO:0043434">
    <property type="term" value="P:response to peptide hormone"/>
    <property type="evidence" value="ECO:0000315"/>
    <property type="project" value="RGD"/>
</dbReference>
<dbReference type="GO" id="GO:0034696">
    <property type="term" value="P:response to prostaglandin F"/>
    <property type="evidence" value="ECO:0000270"/>
    <property type="project" value="RGD"/>
</dbReference>
<dbReference type="CDD" id="cd00275">
    <property type="entry name" value="C2_PLC_like"/>
    <property type="match status" value="1"/>
</dbReference>
<dbReference type="CDD" id="cd16217">
    <property type="entry name" value="EFh_PI-PLCdelta1"/>
    <property type="match status" value="1"/>
</dbReference>
<dbReference type="CDD" id="cd13363">
    <property type="entry name" value="PH_PLC_delta"/>
    <property type="match status" value="1"/>
</dbReference>
<dbReference type="CDD" id="cd08593">
    <property type="entry name" value="PI-PLCc_delta"/>
    <property type="match status" value="1"/>
</dbReference>
<dbReference type="FunFam" id="1.10.238.10:FF:000071">
    <property type="entry name" value="Phosphoinositide phospholipase C"/>
    <property type="match status" value="1"/>
</dbReference>
<dbReference type="FunFam" id="1.10.238.10:FF:000144">
    <property type="entry name" value="Phosphoinositide phospholipase C"/>
    <property type="match status" value="1"/>
</dbReference>
<dbReference type="FunFam" id="2.30.29.30:FF:000088">
    <property type="entry name" value="Phosphoinositide phospholipase C"/>
    <property type="match status" value="1"/>
</dbReference>
<dbReference type="FunFam" id="2.60.40.150:FF:000098">
    <property type="entry name" value="Phosphoinositide phospholipase C"/>
    <property type="match status" value="1"/>
</dbReference>
<dbReference type="FunFam" id="3.20.20.190:FF:000022">
    <property type="entry name" value="Phosphoinositide phospholipase C"/>
    <property type="match status" value="1"/>
</dbReference>
<dbReference type="Gene3D" id="2.60.40.150">
    <property type="entry name" value="C2 domain"/>
    <property type="match status" value="1"/>
</dbReference>
<dbReference type="Gene3D" id="1.10.238.10">
    <property type="entry name" value="EF-hand"/>
    <property type="match status" value="2"/>
</dbReference>
<dbReference type="Gene3D" id="3.20.20.190">
    <property type="entry name" value="Phosphatidylinositol (PI) phosphodiesterase"/>
    <property type="match status" value="1"/>
</dbReference>
<dbReference type="Gene3D" id="2.30.29.30">
    <property type="entry name" value="Pleckstrin-homology domain (PH domain)/Phosphotyrosine-binding domain (PTB)"/>
    <property type="match status" value="1"/>
</dbReference>
<dbReference type="InterPro" id="IPR000008">
    <property type="entry name" value="C2_dom"/>
</dbReference>
<dbReference type="InterPro" id="IPR035892">
    <property type="entry name" value="C2_domain_sf"/>
</dbReference>
<dbReference type="InterPro" id="IPR011992">
    <property type="entry name" value="EF-hand-dom_pair"/>
</dbReference>
<dbReference type="InterPro" id="IPR018247">
    <property type="entry name" value="EF_Hand_1_Ca_BS"/>
</dbReference>
<dbReference type="InterPro" id="IPR002048">
    <property type="entry name" value="EF_hand_dom"/>
</dbReference>
<dbReference type="InterPro" id="IPR011993">
    <property type="entry name" value="PH-like_dom_sf"/>
</dbReference>
<dbReference type="InterPro" id="IPR001849">
    <property type="entry name" value="PH_domain"/>
</dbReference>
<dbReference type="InterPro" id="IPR001192">
    <property type="entry name" value="PI-PLC_fam"/>
</dbReference>
<dbReference type="InterPro" id="IPR028391">
    <property type="entry name" value="PLC-delta1_cat"/>
</dbReference>
<dbReference type="InterPro" id="IPR046975">
    <property type="entry name" value="PLC-delta1_EF"/>
</dbReference>
<dbReference type="InterPro" id="IPR017946">
    <property type="entry name" value="PLC-like_Pdiesterase_TIM-brl"/>
</dbReference>
<dbReference type="InterPro" id="IPR015359">
    <property type="entry name" value="PLC_EF-hand-like"/>
</dbReference>
<dbReference type="InterPro" id="IPR000909">
    <property type="entry name" value="PLipase_C_PInositol-sp_X_dom"/>
</dbReference>
<dbReference type="InterPro" id="IPR001711">
    <property type="entry name" value="PLipase_C_Pinositol-sp_Y"/>
</dbReference>
<dbReference type="PANTHER" id="PTHR10336:SF210">
    <property type="entry name" value="1-PHOSPHATIDYLINOSITOL 4,5-BISPHOSPHATE PHOSPHODIESTERASE DELTA-1"/>
    <property type="match status" value="1"/>
</dbReference>
<dbReference type="PANTHER" id="PTHR10336">
    <property type="entry name" value="PHOSPHOINOSITIDE-SPECIFIC PHOSPHOLIPASE C FAMILY PROTEIN"/>
    <property type="match status" value="1"/>
</dbReference>
<dbReference type="Pfam" id="PF00168">
    <property type="entry name" value="C2"/>
    <property type="match status" value="1"/>
</dbReference>
<dbReference type="Pfam" id="PF09279">
    <property type="entry name" value="EF-hand_like"/>
    <property type="match status" value="1"/>
</dbReference>
<dbReference type="Pfam" id="PF16457">
    <property type="entry name" value="PH_12"/>
    <property type="match status" value="1"/>
</dbReference>
<dbReference type="Pfam" id="PF00388">
    <property type="entry name" value="PI-PLC-X"/>
    <property type="match status" value="1"/>
</dbReference>
<dbReference type="Pfam" id="PF00387">
    <property type="entry name" value="PI-PLC-Y"/>
    <property type="match status" value="1"/>
</dbReference>
<dbReference type="PRINTS" id="PR00390">
    <property type="entry name" value="PHPHLIPASEC"/>
</dbReference>
<dbReference type="SMART" id="SM00239">
    <property type="entry name" value="C2"/>
    <property type="match status" value="1"/>
</dbReference>
<dbReference type="SMART" id="SM00054">
    <property type="entry name" value="EFh"/>
    <property type="match status" value="2"/>
</dbReference>
<dbReference type="SMART" id="SM00233">
    <property type="entry name" value="PH"/>
    <property type="match status" value="1"/>
</dbReference>
<dbReference type="SMART" id="SM00148">
    <property type="entry name" value="PLCXc"/>
    <property type="match status" value="1"/>
</dbReference>
<dbReference type="SMART" id="SM00149">
    <property type="entry name" value="PLCYc"/>
    <property type="match status" value="1"/>
</dbReference>
<dbReference type="SUPFAM" id="SSF49562">
    <property type="entry name" value="C2 domain (Calcium/lipid-binding domain, CaLB)"/>
    <property type="match status" value="1"/>
</dbReference>
<dbReference type="SUPFAM" id="SSF47473">
    <property type="entry name" value="EF-hand"/>
    <property type="match status" value="1"/>
</dbReference>
<dbReference type="SUPFAM" id="SSF50729">
    <property type="entry name" value="PH domain-like"/>
    <property type="match status" value="1"/>
</dbReference>
<dbReference type="SUPFAM" id="SSF51695">
    <property type="entry name" value="PLC-like phosphodiesterases"/>
    <property type="match status" value="1"/>
</dbReference>
<dbReference type="PROSITE" id="PS50004">
    <property type="entry name" value="C2"/>
    <property type="match status" value="1"/>
</dbReference>
<dbReference type="PROSITE" id="PS00018">
    <property type="entry name" value="EF_HAND_1"/>
    <property type="match status" value="2"/>
</dbReference>
<dbReference type="PROSITE" id="PS50222">
    <property type="entry name" value="EF_HAND_2"/>
    <property type="match status" value="2"/>
</dbReference>
<dbReference type="PROSITE" id="PS50003">
    <property type="entry name" value="PH_DOMAIN"/>
    <property type="match status" value="1"/>
</dbReference>
<dbReference type="PROSITE" id="PS50007">
    <property type="entry name" value="PIPLC_X_DOMAIN"/>
    <property type="match status" value="1"/>
</dbReference>
<dbReference type="PROSITE" id="PS50008">
    <property type="entry name" value="PIPLC_Y_DOMAIN"/>
    <property type="match status" value="1"/>
</dbReference>
<comment type="function">
    <text evidence="1 2 9">The production of the second messenger molecules diacylglycerol (DAG) and inositol 1,4,5-trisphosphate (IP3) is mediated by activated phosphatidylinositol-specific phospholipase C enzymes (PubMed:16000311). Essential for trophoblast and placental development (By similarity). Binds phosphatidylinositol 4,5-bisphosphate (By similarity).</text>
</comment>
<comment type="catalytic activity">
    <reaction evidence="9">
        <text>a 1,2-diacyl-sn-glycero-3-phospho-(1D-myo-inositol-4,5-bisphosphate) + H2O = 1D-myo-inositol 1,4,5-trisphosphate + a 1,2-diacyl-sn-glycerol + H(+)</text>
        <dbReference type="Rhea" id="RHEA:33179"/>
        <dbReference type="ChEBI" id="CHEBI:15377"/>
        <dbReference type="ChEBI" id="CHEBI:15378"/>
        <dbReference type="ChEBI" id="CHEBI:17815"/>
        <dbReference type="ChEBI" id="CHEBI:58456"/>
        <dbReference type="ChEBI" id="CHEBI:203600"/>
        <dbReference type="EC" id="3.1.4.11"/>
    </reaction>
    <physiologicalReaction direction="left-to-right" evidence="9">
        <dbReference type="Rhea" id="RHEA:33180"/>
    </physiologicalReaction>
</comment>
<comment type="catalytic activity">
    <reaction evidence="1">
        <text>a 1,2-diacyl-sn-glycero-3-phospho-(1D-myo-inositol) + H2O = 1D-myo-inositol 1-phosphate + a 1,2-diacyl-sn-glycerol + H(+)</text>
        <dbReference type="Rhea" id="RHEA:43484"/>
        <dbReference type="ChEBI" id="CHEBI:15377"/>
        <dbReference type="ChEBI" id="CHEBI:15378"/>
        <dbReference type="ChEBI" id="CHEBI:17815"/>
        <dbReference type="ChEBI" id="CHEBI:57880"/>
        <dbReference type="ChEBI" id="CHEBI:58433"/>
    </reaction>
    <physiologicalReaction direction="left-to-right" evidence="1">
        <dbReference type="Rhea" id="RHEA:43485"/>
    </physiologicalReaction>
</comment>
<comment type="cofactor">
    <cofactor evidence="3">
        <name>Ca(2+)</name>
        <dbReference type="ChEBI" id="CHEBI:29108"/>
    </cofactor>
    <text>Binds 5 Ca(2+) ions per subunit. Two of the Ca(2+) ions are bound to the C2 domain.</text>
</comment>
<comment type="subunit">
    <text evidence="8">Interacts with TGM2.</text>
</comment>
<feature type="chain" id="PRO_0000088506" description="1-phosphatidylinositol 4,5-bisphosphate phosphodiesterase delta-1">
    <location>
        <begin position="1"/>
        <end position="756"/>
    </location>
</feature>
<feature type="domain" description="PH" evidence="4">
    <location>
        <begin position="21"/>
        <end position="130"/>
    </location>
</feature>
<feature type="domain" description="EF-hand 1" evidence="7">
    <location>
        <begin position="140"/>
        <end position="175"/>
    </location>
</feature>
<feature type="domain" description="EF-hand 2" evidence="7">
    <location>
        <begin position="176"/>
        <end position="211"/>
    </location>
</feature>
<feature type="domain" description="PI-PLC X-box" evidence="5">
    <location>
        <begin position="296"/>
        <end position="440"/>
    </location>
</feature>
<feature type="domain" description="PI-PLC Y-box" evidence="6">
    <location>
        <begin position="492"/>
        <end position="609"/>
    </location>
</feature>
<feature type="domain" description="C2" evidence="3">
    <location>
        <begin position="609"/>
        <end position="737"/>
    </location>
</feature>
<feature type="region of interest" description="Substrate binding">
    <location>
        <begin position="30"/>
        <end position="57"/>
    </location>
</feature>
<feature type="active site">
    <location>
        <position position="311"/>
    </location>
</feature>
<feature type="active site">
    <location>
        <position position="356"/>
    </location>
</feature>
<feature type="binding site" evidence="7">
    <location>
        <position position="153"/>
    </location>
    <ligand>
        <name>Ca(2+)</name>
        <dbReference type="ChEBI" id="CHEBI:29108"/>
        <label>1</label>
    </ligand>
</feature>
<feature type="binding site" evidence="7">
    <location>
        <position position="155"/>
    </location>
    <ligand>
        <name>Ca(2+)</name>
        <dbReference type="ChEBI" id="CHEBI:29108"/>
        <label>1</label>
    </ligand>
</feature>
<feature type="binding site" evidence="7">
    <location>
        <position position="157"/>
    </location>
    <ligand>
        <name>Ca(2+)</name>
        <dbReference type="ChEBI" id="CHEBI:29108"/>
        <label>1</label>
    </ligand>
</feature>
<feature type="binding site" evidence="7">
    <location>
        <position position="159"/>
    </location>
    <ligand>
        <name>Ca(2+)</name>
        <dbReference type="ChEBI" id="CHEBI:29108"/>
        <label>1</label>
    </ligand>
</feature>
<feature type="binding site" evidence="7">
    <location>
        <position position="164"/>
    </location>
    <ligand>
        <name>Ca(2+)</name>
        <dbReference type="ChEBI" id="CHEBI:29108"/>
        <label>1</label>
    </ligand>
</feature>
<feature type="binding site" evidence="7">
    <location>
        <position position="189"/>
    </location>
    <ligand>
        <name>Ca(2+)</name>
        <dbReference type="ChEBI" id="CHEBI:29108"/>
        <label>2</label>
    </ligand>
</feature>
<feature type="binding site" evidence="7">
    <location>
        <position position="191"/>
    </location>
    <ligand>
        <name>Ca(2+)</name>
        <dbReference type="ChEBI" id="CHEBI:29108"/>
        <label>2</label>
    </ligand>
</feature>
<feature type="binding site" evidence="7">
    <location>
        <position position="193"/>
    </location>
    <ligand>
        <name>Ca(2+)</name>
        <dbReference type="ChEBI" id="CHEBI:29108"/>
        <label>2</label>
    </ligand>
</feature>
<feature type="binding site" evidence="7">
    <location>
        <position position="195"/>
    </location>
    <ligand>
        <name>Ca(2+)</name>
        <dbReference type="ChEBI" id="CHEBI:29108"/>
        <label>2</label>
    </ligand>
</feature>
<feature type="binding site" evidence="7">
    <location>
        <position position="200"/>
    </location>
    <ligand>
        <name>Ca(2+)</name>
        <dbReference type="ChEBI" id="CHEBI:29108"/>
        <label>2</label>
    </ligand>
</feature>
<feature type="binding site">
    <location>
        <position position="312"/>
    </location>
    <ligand>
        <name>Ca(2+)</name>
        <dbReference type="ChEBI" id="CHEBI:29108"/>
        <label>3</label>
        <note>catalytic</note>
    </ligand>
</feature>
<feature type="binding site">
    <location>
        <position position="341"/>
    </location>
    <ligand>
        <name>Ca(2+)</name>
        <dbReference type="ChEBI" id="CHEBI:29108"/>
        <label>3</label>
        <note>catalytic</note>
    </ligand>
</feature>
<feature type="binding site">
    <location>
        <position position="343"/>
    </location>
    <ligand>
        <name>Ca(2+)</name>
        <dbReference type="ChEBI" id="CHEBI:29108"/>
        <label>3</label>
        <note>catalytic</note>
    </ligand>
</feature>
<feature type="binding site">
    <location>
        <position position="390"/>
    </location>
    <ligand>
        <name>Ca(2+)</name>
        <dbReference type="ChEBI" id="CHEBI:29108"/>
        <label>3</label>
        <note>catalytic</note>
    </ligand>
</feature>
<feature type="binding site">
    <location>
        <position position="438"/>
    </location>
    <ligand>
        <name>substrate</name>
    </ligand>
</feature>
<feature type="binding site">
    <location>
        <position position="440"/>
    </location>
    <ligand>
        <name>substrate</name>
    </ligand>
</feature>
<feature type="binding site">
    <location>
        <position position="522"/>
    </location>
    <ligand>
        <name>substrate</name>
    </ligand>
</feature>
<feature type="binding site">
    <location>
        <position position="549"/>
    </location>
    <ligand>
        <name>substrate</name>
    </ligand>
</feature>
<feature type="binding site">
    <location>
        <position position="651"/>
    </location>
    <ligand>
        <name>Ca(2+)</name>
        <dbReference type="ChEBI" id="CHEBI:29108"/>
        <label>4</label>
    </ligand>
</feature>
<feature type="binding site">
    <location>
        <position position="653"/>
    </location>
    <ligand>
        <name>Ca(2+)</name>
        <dbReference type="ChEBI" id="CHEBI:29108"/>
        <label>4</label>
    </ligand>
</feature>
<feature type="binding site">
    <location>
        <position position="677"/>
    </location>
    <ligand>
        <name>Ca(2+)</name>
        <dbReference type="ChEBI" id="CHEBI:29108"/>
        <label>4</label>
    </ligand>
</feature>
<feature type="binding site">
    <location>
        <position position="706"/>
    </location>
    <ligand>
        <name>Ca(2+)</name>
        <dbReference type="ChEBI" id="CHEBI:29108"/>
        <label>5</label>
    </ligand>
</feature>
<feature type="binding site">
    <location>
        <position position="707"/>
    </location>
    <ligand>
        <name>Ca(2+)</name>
        <dbReference type="ChEBI" id="CHEBI:29108"/>
        <label>5</label>
    </ligand>
</feature>
<feature type="binding site">
    <location>
        <position position="708"/>
    </location>
    <ligand>
        <name>Ca(2+)</name>
        <dbReference type="ChEBI" id="CHEBI:29108"/>
        <label>5</label>
    </ligand>
</feature>
<feature type="modified residue" description="Phosphothreonine" evidence="2">
    <location>
        <position position="457"/>
    </location>
</feature>
<feature type="modified residue" description="Phosphoserine" evidence="1">
    <location>
        <position position="460"/>
    </location>
</feature>
<feature type="glycosylation site" description="O-linked (GlcNAc) serine" evidence="11">
    <location>
        <position position="191"/>
    </location>
</feature>
<feature type="glycosylation site" description="O-linked (GlcNAc) threonine" evidence="11">
    <location>
        <position position="193"/>
    </location>
</feature>
<feature type="sequence variant" description="In SHR." evidence="10">
    <original>I</original>
    <variation>M</variation>
    <location>
        <position position="412"/>
    </location>
</feature>
<feature type="sequence variant" description="In SHR." evidence="10">
    <original>T</original>
    <variation>S</variation>
    <location>
        <position position="423"/>
    </location>
</feature>
<feature type="sequence variant" description="In SHR." evidence="10">
    <original>V</original>
    <variation>D</variation>
    <location>
        <position position="463"/>
    </location>
</feature>
<feature type="sequence variant" description="In SHR." evidence="10">
    <original>G</original>
    <variation>A</variation>
    <location>
        <position position="668"/>
    </location>
</feature>
<feature type="mutagenesis site" description="Lowers activity 10000-fold." evidence="12">
    <original>H</original>
    <variation>A</variation>
    <location>
        <position position="311"/>
    </location>
</feature>
<feature type="mutagenesis site" description="Lowers activity 10000-fold." evidence="12">
    <original>N</original>
    <variation>A</variation>
    <location>
        <position position="312"/>
    </location>
</feature>
<feature type="mutagenesis site" description="Lowers activity 3-fold." evidence="12">
    <original>L</original>
    <variation>A</variation>
    <location>
        <position position="320"/>
    </location>
</feature>
<feature type="mutagenesis site" description="Lowers activity 200000-fold." evidence="12">
    <original>E</original>
    <variation>A</variation>
    <variation>H</variation>
    <variation>Q</variation>
    <location>
        <position position="341"/>
    </location>
</feature>
<feature type="mutagenesis site" description="Lowers activity 1000-fold." evidence="12">
    <original>D</original>
    <variation>A</variation>
    <location>
        <position position="343"/>
    </location>
</feature>
<feature type="mutagenesis site" description="Lowers activity 100000-fold." evidence="12">
    <original>D</original>
    <variation>R</variation>
    <location>
        <position position="343"/>
    </location>
</feature>
<feature type="mutagenesis site" description="Lowers activity 1000-fold." evidence="12">
    <original>H</original>
    <variation>A</variation>
    <location>
        <position position="356"/>
    </location>
</feature>
<feature type="mutagenesis site" description="Lowers activity 4-fold." evidence="12">
    <original>F</original>
    <variation>A</variation>
    <location>
        <position position="360"/>
    </location>
</feature>
<feature type="mutagenesis site" description="Lowers activity 1000-fold." evidence="12">
    <original>E</original>
    <variation>A</variation>
    <variation>H</variation>
    <variation>K</variation>
    <location>
        <position position="390"/>
    </location>
</feature>
<feature type="mutagenesis site" description="Lowers activity 200-fold." evidence="12">
    <original>E</original>
    <variation>Q</variation>
    <location>
        <position position="390"/>
    </location>
</feature>
<feature type="mutagenesis site" description="Lowers activity very slightly." evidence="12">
    <original>K</original>
    <variation>A</variation>
    <location>
        <position position="438"/>
    </location>
</feature>
<feature type="mutagenesis site" description="No effect on activity towards phosphatidylinositol 4-monophosphate. Lowers activity 5-fold towards phosphatidylinositol 4,5-bisphosphate." evidence="12">
    <original>K</original>
    <variation>A</variation>
    <location>
        <position position="440"/>
    </location>
</feature>
<feature type="mutagenesis site" description="Lowers activity 10000-fold." evidence="12">
    <original>S</original>
    <variation>A</variation>
    <location>
        <position position="522"/>
    </location>
</feature>
<feature type="mutagenesis site" description="Lowers activity 600-fold." evidence="12">
    <original>R</original>
    <variation>A</variation>
    <location>
        <position position="549"/>
    </location>
</feature>
<feature type="mutagenesis site" description="Lowers activity 600-fold." evidence="12">
    <original>Y</original>
    <variation>A</variation>
    <location>
        <position position="551"/>
    </location>
</feature>
<feature type="mutagenesis site" description="Lowers activity very slightly." evidence="12">
    <original>W</original>
    <variation>A</variation>
    <location>
        <position position="555"/>
    </location>
</feature>
<feature type="sequence conflict" description="In Ref. 2; AAP31521." evidence="13" ref="2">
    <original>RPE</original>
    <variation>APK</variation>
    <location>
        <begin position="627"/>
        <end position="629"/>
    </location>
</feature>
<feature type="helix" evidence="17">
    <location>
        <begin position="17"/>
        <end position="24"/>
    </location>
</feature>
<feature type="strand" evidence="17">
    <location>
        <begin position="26"/>
        <end position="35"/>
    </location>
</feature>
<feature type="strand" evidence="17">
    <location>
        <begin position="37"/>
        <end position="44"/>
    </location>
</feature>
<feature type="strand" evidence="17">
    <location>
        <begin position="48"/>
        <end position="53"/>
    </location>
</feature>
<feature type="turn" evidence="17">
    <location>
        <begin position="62"/>
        <end position="65"/>
    </location>
</feature>
<feature type="strand" evidence="17">
    <location>
        <begin position="66"/>
        <end position="68"/>
    </location>
</feature>
<feature type="helix" evidence="17">
    <location>
        <begin position="69"/>
        <end position="71"/>
    </location>
</feature>
<feature type="strand" evidence="17">
    <location>
        <begin position="72"/>
        <end position="79"/>
    </location>
</feature>
<feature type="helix" evidence="17">
    <location>
        <begin position="82"/>
        <end position="87"/>
    </location>
</feature>
<feature type="helix" evidence="17">
    <location>
        <begin position="93"/>
        <end position="95"/>
    </location>
</feature>
<feature type="strand" evidence="17">
    <location>
        <begin position="96"/>
        <end position="104"/>
    </location>
</feature>
<feature type="strand" evidence="17">
    <location>
        <begin position="108"/>
        <end position="111"/>
    </location>
</feature>
<feature type="helix" evidence="17">
    <location>
        <begin position="115"/>
        <end position="129"/>
    </location>
</feature>
<feature type="strand" evidence="15">
    <location>
        <begin position="159"/>
        <end position="161"/>
    </location>
</feature>
<feature type="helix" evidence="15">
    <location>
        <begin position="162"/>
        <end position="170"/>
    </location>
</feature>
<feature type="turn" evidence="15">
    <location>
        <begin position="171"/>
        <end position="173"/>
    </location>
</feature>
<feature type="helix" evidence="15">
    <location>
        <begin position="178"/>
        <end position="180"/>
    </location>
</feature>
<feature type="helix" evidence="15">
    <location>
        <begin position="181"/>
        <end position="188"/>
    </location>
</feature>
<feature type="strand" evidence="15">
    <location>
        <begin position="190"/>
        <end position="197"/>
    </location>
</feature>
<feature type="helix" evidence="15">
    <location>
        <begin position="203"/>
        <end position="208"/>
    </location>
</feature>
<feature type="helix" evidence="15">
    <location>
        <begin position="212"/>
        <end position="222"/>
    </location>
</feature>
<feature type="strand" evidence="15">
    <location>
        <begin position="225"/>
        <end position="229"/>
    </location>
</feature>
<feature type="helix" evidence="15">
    <location>
        <begin position="230"/>
        <end position="239"/>
    </location>
</feature>
<feature type="helix" evidence="15">
    <location>
        <begin position="248"/>
        <end position="258"/>
    </location>
</feature>
<feature type="helix" evidence="15">
    <location>
        <begin position="262"/>
        <end position="266"/>
    </location>
</feature>
<feature type="helix" evidence="15">
    <location>
        <begin position="272"/>
        <end position="280"/>
    </location>
</feature>
<feature type="turn" evidence="15">
    <location>
        <begin position="282"/>
        <end position="284"/>
    </location>
</feature>
<feature type="strand" evidence="15">
    <location>
        <begin position="285"/>
        <end position="287"/>
    </location>
</feature>
<feature type="helix" evidence="15">
    <location>
        <begin position="289"/>
        <end position="292"/>
    </location>
</feature>
<feature type="helix" evidence="15">
    <location>
        <begin position="302"/>
        <end position="304"/>
    </location>
</feature>
<feature type="strand" evidence="15">
    <location>
        <begin position="305"/>
        <end position="307"/>
    </location>
</feature>
<feature type="strand" evidence="15">
    <location>
        <begin position="309"/>
        <end position="312"/>
    </location>
</feature>
<feature type="strand" evidence="15">
    <location>
        <begin position="315"/>
        <end position="317"/>
    </location>
</feature>
<feature type="strand" evidence="15">
    <location>
        <begin position="319"/>
        <end position="321"/>
    </location>
</feature>
<feature type="helix" evidence="15">
    <location>
        <begin position="326"/>
        <end position="334"/>
    </location>
</feature>
<feature type="strand" evidence="15">
    <location>
        <begin position="339"/>
        <end position="345"/>
    </location>
</feature>
<feature type="helix" evidence="15">
    <location>
        <begin position="348"/>
        <end position="350"/>
    </location>
</feature>
<feature type="strand" evidence="18">
    <location>
        <begin position="353"/>
        <end position="355"/>
    </location>
</feature>
<feature type="turn" evidence="16">
    <location>
        <begin position="357"/>
        <end position="360"/>
    </location>
</feature>
<feature type="helix" evidence="15">
    <location>
        <begin position="366"/>
        <end position="376"/>
    </location>
</feature>
<feature type="turn" evidence="15">
    <location>
        <begin position="377"/>
        <end position="379"/>
    </location>
</feature>
<feature type="strand" evidence="15">
    <location>
        <begin position="385"/>
        <end position="392"/>
    </location>
</feature>
<feature type="helix" evidence="15">
    <location>
        <begin position="395"/>
        <end position="409"/>
    </location>
</feature>
<feature type="helix" evidence="15">
    <location>
        <begin position="410"/>
        <end position="412"/>
    </location>
</feature>
<feature type="turn" evidence="15">
    <location>
        <begin position="428"/>
        <end position="433"/>
    </location>
</feature>
<feature type="strand" evidence="15">
    <location>
        <begin position="435"/>
        <end position="439"/>
    </location>
</feature>
<feature type="helix" evidence="15">
    <location>
        <begin position="490"/>
        <end position="493"/>
    </location>
</feature>
<feature type="strand" evidence="15">
    <location>
        <begin position="496"/>
        <end position="502"/>
    </location>
</feature>
<feature type="strand" evidence="15">
    <location>
        <begin position="509"/>
        <end position="514"/>
    </location>
</feature>
<feature type="strand" evidence="15">
    <location>
        <begin position="519"/>
        <end position="524"/>
    </location>
</feature>
<feature type="helix" evidence="15">
    <location>
        <begin position="525"/>
        <end position="545"/>
    </location>
</feature>
<feature type="strand" evidence="15">
    <location>
        <begin position="548"/>
        <end position="551"/>
    </location>
</feature>
<feature type="helix" evidence="15">
    <location>
        <begin position="565"/>
        <end position="568"/>
    </location>
</feature>
<feature type="turn" evidence="15">
    <location>
        <begin position="569"/>
        <end position="571"/>
    </location>
</feature>
<feature type="strand" evidence="15">
    <location>
        <begin position="574"/>
        <end position="577"/>
    </location>
</feature>
<feature type="helix" evidence="15">
    <location>
        <begin position="584"/>
        <end position="594"/>
    </location>
</feature>
<feature type="helix" evidence="15">
    <location>
        <begin position="596"/>
        <end position="598"/>
    </location>
</feature>
<feature type="strand" evidence="15">
    <location>
        <begin position="600"/>
        <end position="603"/>
    </location>
</feature>
<feature type="helix" evidence="15">
    <location>
        <begin position="606"/>
        <end position="609"/>
    </location>
</feature>
<feature type="strand" evidence="15">
    <location>
        <begin position="629"/>
        <end position="640"/>
    </location>
</feature>
<feature type="helix" evidence="19">
    <location>
        <begin position="644"/>
        <end position="646"/>
    </location>
</feature>
<feature type="strand" evidence="15">
    <location>
        <begin position="648"/>
        <end position="650"/>
    </location>
</feature>
<feature type="strand" evidence="15">
    <location>
        <begin position="654"/>
        <end position="663"/>
    </location>
</feature>
<feature type="helix" evidence="15">
    <location>
        <begin position="664"/>
        <end position="666"/>
    </location>
</feature>
<feature type="strand" evidence="15">
    <location>
        <begin position="668"/>
        <end position="671"/>
    </location>
</feature>
<feature type="strand" evidence="15">
    <location>
        <begin position="679"/>
        <end position="681"/>
    </location>
</feature>
<feature type="strand" evidence="15">
    <location>
        <begin position="683"/>
        <end position="693"/>
    </location>
</feature>
<feature type="helix" evidence="15">
    <location>
        <begin position="695"/>
        <end position="697"/>
    </location>
</feature>
<feature type="strand" evidence="15">
    <location>
        <begin position="699"/>
        <end position="706"/>
    </location>
</feature>
<feature type="strand" evidence="15">
    <location>
        <begin position="709"/>
        <end position="711"/>
    </location>
</feature>
<feature type="strand" evidence="15">
    <location>
        <begin position="714"/>
        <end position="722"/>
    </location>
</feature>
<feature type="helix" evidence="15">
    <location>
        <begin position="723"/>
        <end position="725"/>
    </location>
</feature>
<feature type="strand" evidence="15">
    <location>
        <begin position="729"/>
        <end position="736"/>
    </location>
</feature>
<feature type="strand" evidence="15">
    <location>
        <begin position="742"/>
        <end position="755"/>
    </location>
</feature>
<accession>P10688</accession>
<accession>Q80WI4</accession>
<accession>Q9QVD3</accession>
<accession>Q9QVD4</accession>
<accession>Q9QVD5</accession>
<sequence length="756" mass="85962">MDSGRDFLTLHGLQDDPDLQALLKGSQLLKVKSSSWRRERFYKLQEDCKTIWQESRKVMRSPESQLFSIEDIQEVRMGHRTEGLEKFARDIPEDRCFSIVFKDQRNTLDLIAPSPADAQHWVQGLRKIIHHSGSMDQRQKLQHWIHSCLRKADKNKDNKMNFKELKDFLKELNIQVDDGYARKIFRECDHSQTDSLEDEEIETFYKMLTQRAEIDRAFEEAAGSAETLSVERLVTFLQHQQREEEAGPALALSLIERYEPSETAKAQRQMTKDGFLMYLLSADGNAFSLAHRRVYQDMDQPLSHYLVSSSHNTYLLEDQLTGPSSTEAYIRALCKGCRCLELDCWDGPNQEPIIYHGYTFTSKILFCDVLRAIRDYAFKASPYPVILSLENHCSLEQQRVMARHLRAILGPILLDQPLDGVTTSLPSPEQLKGKILLKGKKLGGLLPAGGENGSEATDVSDEVEAAEMEDEAVRSQVQHKPKEDKLKLVPELSDMIIYCKSVHFGGFSSPGTSGQAFYEMASFSESRALRLLQESGNGFVRHNVSCLSRIYPAGWRTDSSNYSPVEMWNGGCQIVALNFQTPGPEMDVYLGCFQDNGGCGYVLKPAFLRDPNTTFNSRALTQGPWWRPERLRVRIISGQQLPKVNKNKNSIVDPKVIVEIHGVGRDTGSRQTAVITNNGFNPRWDMEFEFEVTVPDLALVRFMVEDYDSSSKNDFIGQSTIPWNSLKQGYRHVHLLSKNGDQHPSATLFVKISIQD</sequence>
<gene>
    <name evidence="14" type="primary">Plcd1</name>
</gene>
<keyword id="KW-0002">3D-structure</keyword>
<keyword id="KW-0106">Calcium</keyword>
<keyword id="KW-0903">Direct protein sequencing</keyword>
<keyword id="KW-0325">Glycoprotein</keyword>
<keyword id="KW-0378">Hydrolase</keyword>
<keyword id="KW-0442">Lipid degradation</keyword>
<keyword id="KW-0443">Lipid metabolism</keyword>
<keyword id="KW-0479">Metal-binding</keyword>
<keyword id="KW-0597">Phosphoprotein</keyword>
<keyword id="KW-1185">Reference proteome</keyword>
<keyword id="KW-0677">Repeat</keyword>
<keyword id="KW-0807">Transducer</keyword>